<evidence type="ECO:0000255" key="1">
    <source>
        <dbReference type="HAMAP-Rule" id="MF_00539"/>
    </source>
</evidence>
<evidence type="ECO:0000256" key="2">
    <source>
        <dbReference type="SAM" id="MobiDB-lite"/>
    </source>
</evidence>
<evidence type="ECO:0000305" key="3"/>
<feature type="chain" id="PRO_1000128685" description="Large ribosomal subunit protein bL27">
    <location>
        <begin position="1"/>
        <end position="85"/>
    </location>
</feature>
<feature type="region of interest" description="Disordered" evidence="2">
    <location>
        <begin position="1"/>
        <end position="22"/>
    </location>
</feature>
<accession>B6EL42</accession>
<organism>
    <name type="scientific">Aliivibrio salmonicida (strain LFI1238)</name>
    <name type="common">Vibrio salmonicida (strain LFI1238)</name>
    <dbReference type="NCBI Taxonomy" id="316275"/>
    <lineage>
        <taxon>Bacteria</taxon>
        <taxon>Pseudomonadati</taxon>
        <taxon>Pseudomonadota</taxon>
        <taxon>Gammaproteobacteria</taxon>
        <taxon>Vibrionales</taxon>
        <taxon>Vibrionaceae</taxon>
        <taxon>Aliivibrio</taxon>
    </lineage>
</organism>
<dbReference type="EMBL" id="FM178379">
    <property type="protein sequence ID" value="CAQ78047.1"/>
    <property type="molecule type" value="Genomic_DNA"/>
</dbReference>
<dbReference type="RefSeq" id="WP_012549189.1">
    <property type="nucleotide sequence ID" value="NC_011312.1"/>
</dbReference>
<dbReference type="SMR" id="B6EL42"/>
<dbReference type="KEGG" id="vsa:VSAL_I0362"/>
<dbReference type="eggNOG" id="COG0211">
    <property type="taxonomic scope" value="Bacteria"/>
</dbReference>
<dbReference type="HOGENOM" id="CLU_095424_4_1_6"/>
<dbReference type="Proteomes" id="UP000001730">
    <property type="component" value="Chromosome 1"/>
</dbReference>
<dbReference type="GO" id="GO:0022625">
    <property type="term" value="C:cytosolic large ribosomal subunit"/>
    <property type="evidence" value="ECO:0007669"/>
    <property type="project" value="TreeGrafter"/>
</dbReference>
<dbReference type="GO" id="GO:0003735">
    <property type="term" value="F:structural constituent of ribosome"/>
    <property type="evidence" value="ECO:0007669"/>
    <property type="project" value="InterPro"/>
</dbReference>
<dbReference type="GO" id="GO:0006412">
    <property type="term" value="P:translation"/>
    <property type="evidence" value="ECO:0007669"/>
    <property type="project" value="UniProtKB-UniRule"/>
</dbReference>
<dbReference type="FunFam" id="2.40.50.100:FF:000001">
    <property type="entry name" value="50S ribosomal protein L27"/>
    <property type="match status" value="1"/>
</dbReference>
<dbReference type="Gene3D" id="2.40.50.100">
    <property type="match status" value="1"/>
</dbReference>
<dbReference type="HAMAP" id="MF_00539">
    <property type="entry name" value="Ribosomal_bL27"/>
    <property type="match status" value="1"/>
</dbReference>
<dbReference type="InterPro" id="IPR001684">
    <property type="entry name" value="Ribosomal_bL27"/>
</dbReference>
<dbReference type="InterPro" id="IPR018261">
    <property type="entry name" value="Ribosomal_bL27_CS"/>
</dbReference>
<dbReference type="NCBIfam" id="TIGR00062">
    <property type="entry name" value="L27"/>
    <property type="match status" value="1"/>
</dbReference>
<dbReference type="PANTHER" id="PTHR15893:SF0">
    <property type="entry name" value="LARGE RIBOSOMAL SUBUNIT PROTEIN BL27M"/>
    <property type="match status" value="1"/>
</dbReference>
<dbReference type="PANTHER" id="PTHR15893">
    <property type="entry name" value="RIBOSOMAL PROTEIN L27"/>
    <property type="match status" value="1"/>
</dbReference>
<dbReference type="Pfam" id="PF01016">
    <property type="entry name" value="Ribosomal_L27"/>
    <property type="match status" value="1"/>
</dbReference>
<dbReference type="PRINTS" id="PR00063">
    <property type="entry name" value="RIBOSOMALL27"/>
</dbReference>
<dbReference type="SUPFAM" id="SSF110324">
    <property type="entry name" value="Ribosomal L27 protein-like"/>
    <property type="match status" value="1"/>
</dbReference>
<dbReference type="PROSITE" id="PS00831">
    <property type="entry name" value="RIBOSOMAL_L27"/>
    <property type="match status" value="1"/>
</dbReference>
<proteinExistence type="inferred from homology"/>
<gene>
    <name evidence="1" type="primary">rpmA</name>
    <name type="ordered locus">VSAL_I0362</name>
</gene>
<name>RL27_ALISL</name>
<protein>
    <recommendedName>
        <fullName evidence="1">Large ribosomal subunit protein bL27</fullName>
    </recommendedName>
    <alternativeName>
        <fullName evidence="3">50S ribosomal protein L27</fullName>
    </alternativeName>
</protein>
<reference key="1">
    <citation type="journal article" date="2008" name="BMC Genomics">
        <title>The genome sequence of the fish pathogen Aliivibrio salmonicida strain LFI1238 shows extensive evidence of gene decay.</title>
        <authorList>
            <person name="Hjerde E."/>
            <person name="Lorentzen M.S."/>
            <person name="Holden M.T."/>
            <person name="Seeger K."/>
            <person name="Paulsen S."/>
            <person name="Bason N."/>
            <person name="Churcher C."/>
            <person name="Harris D."/>
            <person name="Norbertczak H."/>
            <person name="Quail M.A."/>
            <person name="Sanders S."/>
            <person name="Thurston S."/>
            <person name="Parkhill J."/>
            <person name="Willassen N.P."/>
            <person name="Thomson N.R."/>
        </authorList>
    </citation>
    <scope>NUCLEOTIDE SEQUENCE [LARGE SCALE GENOMIC DNA]</scope>
    <source>
        <strain>LFI1238</strain>
    </source>
</reference>
<keyword id="KW-0687">Ribonucleoprotein</keyword>
<keyword id="KW-0689">Ribosomal protein</keyword>
<sequence>MAHKKAGGSTRNGRDSESKRLGVKRFGGESVLAGNIIVRQRGTKFHAGTNVGIGKDHTLFALSEGKVKFEVKGPKNRKFVSIDAE</sequence>
<comment type="similarity">
    <text evidence="1">Belongs to the bacterial ribosomal protein bL27 family.</text>
</comment>